<comment type="catalytic activity">
    <reaction>
        <text>Hydrolysis of (1-&gt;4)-alpha-D-glucosidic linkages in polysaccharides so as to remove successive maltose units from the non-reducing ends of the chains.</text>
        <dbReference type="EC" id="3.2.1.2"/>
    </reaction>
</comment>
<comment type="similarity">
    <text evidence="3">Belongs to the glycosyl hydrolase 14 family.</text>
</comment>
<gene>
    <name type="primary">BMY1</name>
</gene>
<sequence length="496" mass="56088">MATSNKNMLLNYVPVYVMLPLGVINVNNVFEDPDGLKEQLVQLRAAGVDGVMVDVWWGIIEQKGPKEYDWSAYKSLFQLVQECGLKLQAIMSFHQCGGNVGDVVTIPIPQWVLDIGESDPDIFYTNRSGTRDKEYLTVGVDNKPIFHGRTAIEIYSDYMKSFRENMSEFLKSELIIDIEVGLGPAGELRYPSYPQNQGWVFPGIGEFQCYDKYLKADFKAAAAKAGHSEWELPDDAGTYNDIPESTEFFKTNGTYLTEKGKFFLTWYSNQLLNHGDQILDEANKAFLGCKVKLAIKVSGIHWWYKAQNHAAELTAGYYNLDDRDGYRPIAKMVSRHHGILNFTCLEMRDSEQSSDAQSAPQELVQQVLSGGWRENIEVAGENALSRYDATAYNQIILNARPQGVNKDGPPKLRMYGVTYLRLSDDLLQESNFEIFKKFVVKMHADQSHCDDPQEYNHAIPPLKRSGPNIPVDDLLEATKPILPFPWDSETDMKVDG</sequence>
<name>AMYB_TRIRP</name>
<evidence type="ECO:0000250" key="1">
    <source>
        <dbReference type="UniProtKB" id="P10538"/>
    </source>
</evidence>
<evidence type="ECO:0000255" key="2">
    <source>
        <dbReference type="PROSITE-ProRule" id="PRU10050"/>
    </source>
</evidence>
<evidence type="ECO:0000305" key="3"/>
<accession>O65015</accession>
<dbReference type="EC" id="3.2.1.2"/>
<dbReference type="EMBL" id="AF049098">
    <property type="protein sequence ID" value="AAD04259.1"/>
    <property type="molecule type" value="mRNA"/>
</dbReference>
<dbReference type="PIR" id="T08117">
    <property type="entry name" value="T08117"/>
</dbReference>
<dbReference type="SMR" id="O65015"/>
<dbReference type="CAZy" id="GH14">
    <property type="family name" value="Glycoside Hydrolase Family 14"/>
</dbReference>
<dbReference type="GO" id="GO:0016161">
    <property type="term" value="F:beta-amylase activity"/>
    <property type="evidence" value="ECO:0007669"/>
    <property type="project" value="UniProtKB-EC"/>
</dbReference>
<dbReference type="GO" id="GO:0000272">
    <property type="term" value="P:polysaccharide catabolic process"/>
    <property type="evidence" value="ECO:0007669"/>
    <property type="project" value="UniProtKB-KW"/>
</dbReference>
<dbReference type="FunFam" id="3.20.20.80:FF:000066">
    <property type="entry name" value="Beta-amylase"/>
    <property type="match status" value="1"/>
</dbReference>
<dbReference type="Gene3D" id="3.20.20.80">
    <property type="entry name" value="Glycosidases"/>
    <property type="match status" value="1"/>
</dbReference>
<dbReference type="InterPro" id="IPR001554">
    <property type="entry name" value="Glyco_hydro_14"/>
</dbReference>
<dbReference type="InterPro" id="IPR018238">
    <property type="entry name" value="Glyco_hydro_14_CS"/>
</dbReference>
<dbReference type="InterPro" id="IPR001371">
    <property type="entry name" value="Glyco_hydro_14B_pln"/>
</dbReference>
<dbReference type="InterPro" id="IPR017853">
    <property type="entry name" value="Glycoside_hydrolase_SF"/>
</dbReference>
<dbReference type="PANTHER" id="PTHR31352">
    <property type="entry name" value="BETA-AMYLASE 1, CHLOROPLASTIC"/>
    <property type="match status" value="1"/>
</dbReference>
<dbReference type="PANTHER" id="PTHR31352:SF40">
    <property type="entry name" value="BETA-AMYLASE 6"/>
    <property type="match status" value="1"/>
</dbReference>
<dbReference type="Pfam" id="PF01373">
    <property type="entry name" value="Glyco_hydro_14"/>
    <property type="match status" value="1"/>
</dbReference>
<dbReference type="PRINTS" id="PR00750">
    <property type="entry name" value="BETAAMYLASE"/>
</dbReference>
<dbReference type="PRINTS" id="PR00842">
    <property type="entry name" value="GLHYDLASE14B"/>
</dbReference>
<dbReference type="SUPFAM" id="SSF51445">
    <property type="entry name" value="(Trans)glycosidases"/>
    <property type="match status" value="1"/>
</dbReference>
<dbReference type="PROSITE" id="PS00506">
    <property type="entry name" value="BETA_AMYLASE_1"/>
    <property type="match status" value="1"/>
</dbReference>
<dbReference type="PROSITE" id="PS00679">
    <property type="entry name" value="BETA_AMYLASE_2"/>
    <property type="match status" value="1"/>
</dbReference>
<organism>
    <name type="scientific">Trifolium repens</name>
    <name type="common">Creeping white clover</name>
    <dbReference type="NCBI Taxonomy" id="3899"/>
    <lineage>
        <taxon>Eukaryota</taxon>
        <taxon>Viridiplantae</taxon>
        <taxon>Streptophyta</taxon>
        <taxon>Embryophyta</taxon>
        <taxon>Tracheophyta</taxon>
        <taxon>Spermatophyta</taxon>
        <taxon>Magnoliopsida</taxon>
        <taxon>eudicotyledons</taxon>
        <taxon>Gunneridae</taxon>
        <taxon>Pentapetalae</taxon>
        <taxon>rosids</taxon>
        <taxon>fabids</taxon>
        <taxon>Fabales</taxon>
        <taxon>Fabaceae</taxon>
        <taxon>Papilionoideae</taxon>
        <taxon>50 kb inversion clade</taxon>
        <taxon>NPAAA clade</taxon>
        <taxon>Hologalegina</taxon>
        <taxon>IRL clade</taxon>
        <taxon>Trifolieae</taxon>
        <taxon>Trifolium</taxon>
    </lineage>
</organism>
<reference key="1">
    <citation type="submission" date="1998-02" db="EMBL/GenBank/DDBJ databases">
        <title>Nucleotide sequence of a beta-amylase cDNA from white clover stollons.</title>
        <authorList>
            <person name="Gallagher J."/>
            <person name="Gana J.A."/>
            <person name="Pollock C."/>
            <person name="Cunningham S.M."/>
            <person name="Volenec J.J."/>
        </authorList>
    </citation>
    <scope>NUCLEOTIDE SEQUENCE [MRNA]</scope>
</reference>
<feature type="chain" id="PRO_0000153939" description="Beta-amylase">
    <location>
        <begin position="1"/>
        <end position="496"/>
    </location>
</feature>
<feature type="active site" description="Proton donor" evidence="2">
    <location>
        <position position="187"/>
    </location>
</feature>
<feature type="active site" description="Proton acceptor" evidence="1">
    <location>
        <position position="381"/>
    </location>
</feature>
<feature type="binding site" evidence="1">
    <location>
        <position position="54"/>
    </location>
    <ligand>
        <name>substrate</name>
    </ligand>
</feature>
<feature type="binding site" evidence="1">
    <location>
        <position position="94"/>
    </location>
    <ligand>
        <name>substrate</name>
    </ligand>
</feature>
<feature type="binding site" evidence="1">
    <location>
        <position position="102"/>
    </location>
    <ligand>
        <name>substrate</name>
    </ligand>
</feature>
<feature type="binding site" evidence="1">
    <location>
        <position position="296"/>
    </location>
    <ligand>
        <name>substrate</name>
    </ligand>
</feature>
<feature type="binding site" evidence="1">
    <location>
        <position position="301"/>
    </location>
    <ligand>
        <name>substrate</name>
    </ligand>
</feature>
<feature type="binding site" evidence="1">
    <location>
        <position position="343"/>
    </location>
    <ligand>
        <name>substrate</name>
    </ligand>
</feature>
<feature type="binding site" evidence="1">
    <location>
        <begin position="382"/>
        <end position="383"/>
    </location>
    <ligand>
        <name>substrate</name>
    </ligand>
</feature>
<feature type="binding site" evidence="1">
    <location>
        <position position="421"/>
    </location>
    <ligand>
        <name>substrate</name>
    </ligand>
</feature>
<keyword id="KW-0119">Carbohydrate metabolism</keyword>
<keyword id="KW-0326">Glycosidase</keyword>
<keyword id="KW-0378">Hydrolase</keyword>
<keyword id="KW-0624">Polysaccharide degradation</keyword>
<proteinExistence type="evidence at transcript level"/>
<protein>
    <recommendedName>
        <fullName>Beta-amylase</fullName>
        <ecNumber>3.2.1.2</ecNumber>
    </recommendedName>
    <alternativeName>
        <fullName>1,4-alpha-D-glucan maltohydrolase</fullName>
    </alternativeName>
</protein>